<dbReference type="EC" id="2.4.2.18" evidence="1"/>
<dbReference type="EMBL" id="CP000908">
    <property type="protein sequence ID" value="ABY33039.1"/>
    <property type="molecule type" value="Genomic_DNA"/>
</dbReference>
<dbReference type="RefSeq" id="WP_012255724.1">
    <property type="nucleotide sequence ID" value="NC_010172.1"/>
</dbReference>
<dbReference type="SMR" id="A9W900"/>
<dbReference type="KEGG" id="mex:Mext_4671"/>
<dbReference type="eggNOG" id="COG0547">
    <property type="taxonomic scope" value="Bacteria"/>
</dbReference>
<dbReference type="HOGENOM" id="CLU_034315_2_1_5"/>
<dbReference type="BioCyc" id="MEXT419610:MEXT_RS23465-MONOMER"/>
<dbReference type="UniPathway" id="UPA00035">
    <property type="reaction ID" value="UER00041"/>
</dbReference>
<dbReference type="GO" id="GO:0005829">
    <property type="term" value="C:cytosol"/>
    <property type="evidence" value="ECO:0007669"/>
    <property type="project" value="TreeGrafter"/>
</dbReference>
<dbReference type="GO" id="GO:0004048">
    <property type="term" value="F:anthranilate phosphoribosyltransferase activity"/>
    <property type="evidence" value="ECO:0007669"/>
    <property type="project" value="UniProtKB-UniRule"/>
</dbReference>
<dbReference type="GO" id="GO:0000287">
    <property type="term" value="F:magnesium ion binding"/>
    <property type="evidence" value="ECO:0007669"/>
    <property type="project" value="UniProtKB-UniRule"/>
</dbReference>
<dbReference type="GO" id="GO:0000162">
    <property type="term" value="P:L-tryptophan biosynthetic process"/>
    <property type="evidence" value="ECO:0007669"/>
    <property type="project" value="UniProtKB-UniRule"/>
</dbReference>
<dbReference type="FunFam" id="3.40.1030.10:FF:000002">
    <property type="entry name" value="Anthranilate phosphoribosyltransferase"/>
    <property type="match status" value="1"/>
</dbReference>
<dbReference type="Gene3D" id="3.40.1030.10">
    <property type="entry name" value="Nucleoside phosphorylase/phosphoribosyltransferase catalytic domain"/>
    <property type="match status" value="1"/>
</dbReference>
<dbReference type="Gene3D" id="1.20.970.10">
    <property type="entry name" value="Transferase, Pyrimidine Nucleoside Phosphorylase, Chain C"/>
    <property type="match status" value="1"/>
</dbReference>
<dbReference type="HAMAP" id="MF_00211">
    <property type="entry name" value="TrpD"/>
    <property type="match status" value="1"/>
</dbReference>
<dbReference type="InterPro" id="IPR005940">
    <property type="entry name" value="Anthranilate_Pribosyl_Tfrase"/>
</dbReference>
<dbReference type="InterPro" id="IPR000312">
    <property type="entry name" value="Glycosyl_Trfase_fam3"/>
</dbReference>
<dbReference type="InterPro" id="IPR017459">
    <property type="entry name" value="Glycosyl_Trfase_fam3_N_dom"/>
</dbReference>
<dbReference type="InterPro" id="IPR036320">
    <property type="entry name" value="Glycosyl_Trfase_fam3_N_dom_sf"/>
</dbReference>
<dbReference type="InterPro" id="IPR035902">
    <property type="entry name" value="Nuc_phospho_transferase"/>
</dbReference>
<dbReference type="NCBIfam" id="TIGR01245">
    <property type="entry name" value="trpD"/>
    <property type="match status" value="1"/>
</dbReference>
<dbReference type="PANTHER" id="PTHR43285">
    <property type="entry name" value="ANTHRANILATE PHOSPHORIBOSYLTRANSFERASE"/>
    <property type="match status" value="1"/>
</dbReference>
<dbReference type="PANTHER" id="PTHR43285:SF2">
    <property type="entry name" value="ANTHRANILATE PHOSPHORIBOSYLTRANSFERASE"/>
    <property type="match status" value="1"/>
</dbReference>
<dbReference type="Pfam" id="PF02885">
    <property type="entry name" value="Glycos_trans_3N"/>
    <property type="match status" value="1"/>
</dbReference>
<dbReference type="Pfam" id="PF00591">
    <property type="entry name" value="Glycos_transf_3"/>
    <property type="match status" value="1"/>
</dbReference>
<dbReference type="SUPFAM" id="SSF52418">
    <property type="entry name" value="Nucleoside phosphorylase/phosphoribosyltransferase catalytic domain"/>
    <property type="match status" value="1"/>
</dbReference>
<dbReference type="SUPFAM" id="SSF47648">
    <property type="entry name" value="Nucleoside phosphorylase/phosphoribosyltransferase N-terminal domain"/>
    <property type="match status" value="1"/>
</dbReference>
<organism>
    <name type="scientific">Methylorubrum extorquens (strain PA1)</name>
    <name type="common">Methylobacterium extorquens</name>
    <dbReference type="NCBI Taxonomy" id="419610"/>
    <lineage>
        <taxon>Bacteria</taxon>
        <taxon>Pseudomonadati</taxon>
        <taxon>Pseudomonadota</taxon>
        <taxon>Alphaproteobacteria</taxon>
        <taxon>Hyphomicrobiales</taxon>
        <taxon>Methylobacteriaceae</taxon>
        <taxon>Methylorubrum</taxon>
    </lineage>
</organism>
<comment type="function">
    <text evidence="1">Catalyzes the transfer of the phosphoribosyl group of 5-phosphorylribose-1-pyrophosphate (PRPP) to anthranilate to yield N-(5'-phosphoribosyl)-anthranilate (PRA).</text>
</comment>
<comment type="catalytic activity">
    <reaction evidence="1">
        <text>N-(5-phospho-beta-D-ribosyl)anthranilate + diphosphate = 5-phospho-alpha-D-ribose 1-diphosphate + anthranilate</text>
        <dbReference type="Rhea" id="RHEA:11768"/>
        <dbReference type="ChEBI" id="CHEBI:16567"/>
        <dbReference type="ChEBI" id="CHEBI:18277"/>
        <dbReference type="ChEBI" id="CHEBI:33019"/>
        <dbReference type="ChEBI" id="CHEBI:58017"/>
        <dbReference type="EC" id="2.4.2.18"/>
    </reaction>
</comment>
<comment type="cofactor">
    <cofactor evidence="1">
        <name>Mg(2+)</name>
        <dbReference type="ChEBI" id="CHEBI:18420"/>
    </cofactor>
    <text evidence="1">Binds 2 magnesium ions per monomer.</text>
</comment>
<comment type="pathway">
    <text evidence="1">Amino-acid biosynthesis; L-tryptophan biosynthesis; L-tryptophan from chorismate: step 2/5.</text>
</comment>
<comment type="subunit">
    <text evidence="1">Homodimer.</text>
</comment>
<comment type="similarity">
    <text evidence="1">Belongs to the anthranilate phosphoribosyltransferase family.</text>
</comment>
<gene>
    <name evidence="1" type="primary">trpD</name>
    <name type="ordered locus">Mext_4671</name>
</gene>
<reference key="1">
    <citation type="submission" date="2007-12" db="EMBL/GenBank/DDBJ databases">
        <title>Complete sequence of Methylobacterium extorquens PA1.</title>
        <authorList>
            <consortium name="US DOE Joint Genome Institute"/>
            <person name="Copeland A."/>
            <person name="Lucas S."/>
            <person name="Lapidus A."/>
            <person name="Barry K."/>
            <person name="Glavina del Rio T."/>
            <person name="Dalin E."/>
            <person name="Tice H."/>
            <person name="Pitluck S."/>
            <person name="Saunders E."/>
            <person name="Brettin T."/>
            <person name="Bruce D."/>
            <person name="Detter J.C."/>
            <person name="Han C."/>
            <person name="Schmutz J."/>
            <person name="Larimer F."/>
            <person name="Land M."/>
            <person name="Hauser L."/>
            <person name="Kyrpides N."/>
            <person name="Kim E."/>
            <person name="Marx C."/>
            <person name="Richardson P."/>
        </authorList>
    </citation>
    <scope>NUCLEOTIDE SEQUENCE [LARGE SCALE GENOMIC DNA]</scope>
    <source>
        <strain>PA1</strain>
    </source>
</reference>
<feature type="chain" id="PRO_1000099815" description="Anthranilate phosphoribosyltransferase">
    <location>
        <begin position="1"/>
        <end position="337"/>
    </location>
</feature>
<feature type="binding site" evidence="1">
    <location>
        <position position="81"/>
    </location>
    <ligand>
        <name>5-phospho-alpha-D-ribose 1-diphosphate</name>
        <dbReference type="ChEBI" id="CHEBI:58017"/>
    </ligand>
</feature>
<feature type="binding site" evidence="1">
    <location>
        <position position="81"/>
    </location>
    <ligand>
        <name>anthranilate</name>
        <dbReference type="ChEBI" id="CHEBI:16567"/>
        <label>1</label>
    </ligand>
</feature>
<feature type="binding site" evidence="1">
    <location>
        <begin position="84"/>
        <end position="85"/>
    </location>
    <ligand>
        <name>5-phospho-alpha-D-ribose 1-diphosphate</name>
        <dbReference type="ChEBI" id="CHEBI:58017"/>
    </ligand>
</feature>
<feature type="binding site" evidence="1">
    <location>
        <position position="89"/>
    </location>
    <ligand>
        <name>5-phospho-alpha-D-ribose 1-diphosphate</name>
        <dbReference type="ChEBI" id="CHEBI:58017"/>
    </ligand>
</feature>
<feature type="binding site" evidence="1">
    <location>
        <begin position="91"/>
        <end position="94"/>
    </location>
    <ligand>
        <name>5-phospho-alpha-D-ribose 1-diphosphate</name>
        <dbReference type="ChEBI" id="CHEBI:58017"/>
    </ligand>
</feature>
<feature type="binding site" evidence="1">
    <location>
        <position position="93"/>
    </location>
    <ligand>
        <name>Mg(2+)</name>
        <dbReference type="ChEBI" id="CHEBI:18420"/>
        <label>1</label>
    </ligand>
</feature>
<feature type="binding site" evidence="1">
    <location>
        <begin position="109"/>
        <end position="117"/>
    </location>
    <ligand>
        <name>5-phospho-alpha-D-ribose 1-diphosphate</name>
        <dbReference type="ChEBI" id="CHEBI:58017"/>
    </ligand>
</feature>
<feature type="binding site" evidence="1">
    <location>
        <position position="112"/>
    </location>
    <ligand>
        <name>anthranilate</name>
        <dbReference type="ChEBI" id="CHEBI:16567"/>
        <label>1</label>
    </ligand>
</feature>
<feature type="binding site" evidence="1">
    <location>
        <position position="121"/>
    </location>
    <ligand>
        <name>5-phospho-alpha-D-ribose 1-diphosphate</name>
        <dbReference type="ChEBI" id="CHEBI:58017"/>
    </ligand>
</feature>
<feature type="binding site" evidence="1">
    <location>
        <position position="167"/>
    </location>
    <ligand>
        <name>anthranilate</name>
        <dbReference type="ChEBI" id="CHEBI:16567"/>
        <label>2</label>
    </ligand>
</feature>
<feature type="binding site" evidence="1">
    <location>
        <position position="226"/>
    </location>
    <ligand>
        <name>Mg(2+)</name>
        <dbReference type="ChEBI" id="CHEBI:18420"/>
        <label>2</label>
    </ligand>
</feature>
<feature type="binding site" evidence="1">
    <location>
        <position position="227"/>
    </location>
    <ligand>
        <name>Mg(2+)</name>
        <dbReference type="ChEBI" id="CHEBI:18420"/>
        <label>1</label>
    </ligand>
</feature>
<feature type="binding site" evidence="1">
    <location>
        <position position="227"/>
    </location>
    <ligand>
        <name>Mg(2+)</name>
        <dbReference type="ChEBI" id="CHEBI:18420"/>
        <label>2</label>
    </ligand>
</feature>
<name>TRPD_METEP</name>
<proteinExistence type="inferred from homology"/>
<keyword id="KW-0028">Amino-acid biosynthesis</keyword>
<keyword id="KW-0057">Aromatic amino acid biosynthesis</keyword>
<keyword id="KW-0328">Glycosyltransferase</keyword>
<keyword id="KW-0460">Magnesium</keyword>
<keyword id="KW-0479">Metal-binding</keyword>
<keyword id="KW-0808">Transferase</keyword>
<keyword id="KW-0822">Tryptophan biosynthesis</keyword>
<accession>A9W900</accession>
<sequence length="337" mass="34312">MDAFKTHLAIVASGAPLSREQARAAFDDLLSGEVTPIQAGAFLTALSVRGESEDEIVGAVSAMRARMLPVAAPEGAIDIVGTGGDHSGSYNVSTLAAILTAACGVPVAKHGNRAATSRSGAADVLAALGVKIGLPPEALARCLSEAGLCFMFAQTHHGAMRHVAPVRTELPFRTIFNMLGPLSNPAGVTAQVFGVSRPAWAEPLTRVLATLGSRRVWTVHGSDGLDEITTTGPTAVVALENGAFRHFTLDPREVGLPLATLDDLRGGDPEHNAAALGAVLEGTRNAYRDIAVLNAGAGLVVAGAAGSLAEGVARAQEAIDSGAARGTLARLVAVSNA</sequence>
<protein>
    <recommendedName>
        <fullName evidence="1">Anthranilate phosphoribosyltransferase</fullName>
        <ecNumber evidence="1">2.4.2.18</ecNumber>
    </recommendedName>
</protein>
<evidence type="ECO:0000255" key="1">
    <source>
        <dbReference type="HAMAP-Rule" id="MF_00211"/>
    </source>
</evidence>